<feature type="chain" id="PRO_0000342992" description="HMP-PP phosphatase">
    <location>
        <begin position="1"/>
        <end position="272"/>
    </location>
</feature>
<feature type="active site" description="Nucleophile" evidence="1">
    <location>
        <position position="8"/>
    </location>
</feature>
<feature type="binding site" evidence="1">
    <location>
        <position position="8"/>
    </location>
    <ligand>
        <name>Mg(2+)</name>
        <dbReference type="ChEBI" id="CHEBI:18420"/>
    </ligand>
</feature>
<feature type="binding site" evidence="1">
    <location>
        <position position="10"/>
    </location>
    <ligand>
        <name>Mg(2+)</name>
        <dbReference type="ChEBI" id="CHEBI:18420"/>
    </ligand>
</feature>
<feature type="binding site" evidence="1">
    <location>
        <position position="212"/>
    </location>
    <ligand>
        <name>Mg(2+)</name>
        <dbReference type="ChEBI" id="CHEBI:18420"/>
    </ligand>
</feature>
<comment type="function">
    <text evidence="1">Catalyzes the hydrolysis of 4-amino-2-methyl-5-hydroxymethylpyrimidine pyrophosphate (HMP-PP) to 4-amino-2-methyl-5-hydroxymethylpyrimidine phosphate (HMP-P).</text>
</comment>
<comment type="catalytic activity">
    <reaction evidence="1">
        <text>4-amino-2-methyl-5-(diphosphooxymethyl)pyrimidine + H2O = 4-amino-2-methyl-5-(phosphooxymethyl)pyrimidine + phosphate + H(+)</text>
        <dbReference type="Rhea" id="RHEA:27914"/>
        <dbReference type="ChEBI" id="CHEBI:15377"/>
        <dbReference type="ChEBI" id="CHEBI:15378"/>
        <dbReference type="ChEBI" id="CHEBI:43474"/>
        <dbReference type="ChEBI" id="CHEBI:57841"/>
        <dbReference type="ChEBI" id="CHEBI:58354"/>
    </reaction>
</comment>
<comment type="cofactor">
    <cofactor evidence="1">
        <name>Mg(2+)</name>
        <dbReference type="ChEBI" id="CHEBI:18420"/>
    </cofactor>
</comment>
<comment type="similarity">
    <text evidence="1">Belongs to the HAD-like hydrolase superfamily. Cof family.</text>
</comment>
<dbReference type="EC" id="3.6.1.-" evidence="1"/>
<dbReference type="EMBL" id="AE014613">
    <property type="protein sequence ID" value="AAO69993.1"/>
    <property type="molecule type" value="Genomic_DNA"/>
</dbReference>
<dbReference type="EMBL" id="AL513382">
    <property type="protein sequence ID" value="CAD08916.1"/>
    <property type="molecule type" value="Genomic_DNA"/>
</dbReference>
<dbReference type="RefSeq" id="NP_455054.1">
    <property type="nucleotide sequence ID" value="NC_003198.1"/>
</dbReference>
<dbReference type="RefSeq" id="WP_000113040.1">
    <property type="nucleotide sequence ID" value="NZ_WSUR01000026.1"/>
</dbReference>
<dbReference type="SMR" id="Q8Z8U7"/>
<dbReference type="STRING" id="220341.gene:17584521"/>
<dbReference type="KEGG" id="stt:t2403"/>
<dbReference type="KEGG" id="sty:STY0499"/>
<dbReference type="PATRIC" id="fig|220341.7.peg.501"/>
<dbReference type="eggNOG" id="COG0561">
    <property type="taxonomic scope" value="Bacteria"/>
</dbReference>
<dbReference type="HOGENOM" id="CLU_044146_5_2_6"/>
<dbReference type="OMA" id="CFSAMDC"/>
<dbReference type="OrthoDB" id="5498330at2"/>
<dbReference type="Proteomes" id="UP000000541">
    <property type="component" value="Chromosome"/>
</dbReference>
<dbReference type="Proteomes" id="UP000002670">
    <property type="component" value="Chromosome"/>
</dbReference>
<dbReference type="GO" id="GO:0002145">
    <property type="term" value="F:4-amino-5-hydroxymethyl-2-methylpyrimidine diphosphatase activity"/>
    <property type="evidence" value="ECO:0007669"/>
    <property type="project" value="RHEA"/>
</dbReference>
<dbReference type="GO" id="GO:0000287">
    <property type="term" value="F:magnesium ion binding"/>
    <property type="evidence" value="ECO:0000250"/>
    <property type="project" value="UniProtKB"/>
</dbReference>
<dbReference type="GO" id="GO:0016791">
    <property type="term" value="F:phosphatase activity"/>
    <property type="evidence" value="ECO:0000250"/>
    <property type="project" value="UniProtKB"/>
</dbReference>
<dbReference type="CDD" id="cd07516">
    <property type="entry name" value="HAD_Pase"/>
    <property type="match status" value="1"/>
</dbReference>
<dbReference type="FunFam" id="3.30.1240.10:FF:000002">
    <property type="entry name" value="HMP-PP phosphatase"/>
    <property type="match status" value="1"/>
</dbReference>
<dbReference type="Gene3D" id="3.30.1240.10">
    <property type="match status" value="1"/>
</dbReference>
<dbReference type="Gene3D" id="3.40.50.1000">
    <property type="entry name" value="HAD superfamily/HAD-like"/>
    <property type="match status" value="1"/>
</dbReference>
<dbReference type="HAMAP" id="MF_01847">
    <property type="entry name" value="HMP_PP_phosphat"/>
    <property type="match status" value="1"/>
</dbReference>
<dbReference type="InterPro" id="IPR000150">
    <property type="entry name" value="Cof"/>
</dbReference>
<dbReference type="InterPro" id="IPR036412">
    <property type="entry name" value="HAD-like_sf"/>
</dbReference>
<dbReference type="InterPro" id="IPR006379">
    <property type="entry name" value="HAD-SF_hydro_IIB"/>
</dbReference>
<dbReference type="InterPro" id="IPR023214">
    <property type="entry name" value="HAD_sf"/>
</dbReference>
<dbReference type="InterPro" id="IPR023938">
    <property type="entry name" value="HMP-PP_phosphatase"/>
</dbReference>
<dbReference type="NCBIfam" id="TIGR00099">
    <property type="entry name" value="Cof-subfamily"/>
    <property type="match status" value="1"/>
</dbReference>
<dbReference type="NCBIfam" id="TIGR01484">
    <property type="entry name" value="HAD-SF-IIB"/>
    <property type="match status" value="1"/>
</dbReference>
<dbReference type="NCBIfam" id="NF011705">
    <property type="entry name" value="PRK15126.1"/>
    <property type="match status" value="1"/>
</dbReference>
<dbReference type="PANTHER" id="PTHR47267">
    <property type="match status" value="1"/>
</dbReference>
<dbReference type="PANTHER" id="PTHR47267:SF2">
    <property type="entry name" value="HMP-PP PHOSPHATASE"/>
    <property type="match status" value="1"/>
</dbReference>
<dbReference type="Pfam" id="PF08282">
    <property type="entry name" value="Hydrolase_3"/>
    <property type="match status" value="1"/>
</dbReference>
<dbReference type="SFLD" id="SFLDG01140">
    <property type="entry name" value="C2.B:_Phosphomannomutase_and_P"/>
    <property type="match status" value="1"/>
</dbReference>
<dbReference type="SFLD" id="SFLDS00003">
    <property type="entry name" value="Haloacid_Dehalogenase"/>
    <property type="match status" value="1"/>
</dbReference>
<dbReference type="SUPFAM" id="SSF56784">
    <property type="entry name" value="HAD-like"/>
    <property type="match status" value="1"/>
</dbReference>
<dbReference type="PROSITE" id="PS01228">
    <property type="entry name" value="COF_1"/>
    <property type="match status" value="1"/>
</dbReference>
<dbReference type="PROSITE" id="PS01229">
    <property type="entry name" value="COF_2"/>
    <property type="match status" value="1"/>
</dbReference>
<evidence type="ECO:0000255" key="1">
    <source>
        <dbReference type="HAMAP-Rule" id="MF_01847"/>
    </source>
</evidence>
<keyword id="KW-0378">Hydrolase</keyword>
<keyword id="KW-0460">Magnesium</keyword>
<keyword id="KW-0479">Metal-binding</keyword>
<accession>Q8Z8U7</accession>
<accession>Q7C897</accession>
<gene>
    <name evidence="1" type="primary">cof</name>
    <name type="ordered locus">STY0499</name>
    <name type="ordered locus">t2403</name>
</gene>
<name>COF_SALTI</name>
<proteinExistence type="inferred from homology"/>
<organism>
    <name type="scientific">Salmonella typhi</name>
    <dbReference type="NCBI Taxonomy" id="90370"/>
    <lineage>
        <taxon>Bacteria</taxon>
        <taxon>Pseudomonadati</taxon>
        <taxon>Pseudomonadota</taxon>
        <taxon>Gammaproteobacteria</taxon>
        <taxon>Enterobacterales</taxon>
        <taxon>Enterobacteriaceae</taxon>
        <taxon>Salmonella</taxon>
    </lineage>
</organism>
<reference key="1">
    <citation type="journal article" date="2001" name="Nature">
        <title>Complete genome sequence of a multiple drug resistant Salmonella enterica serovar Typhi CT18.</title>
        <authorList>
            <person name="Parkhill J."/>
            <person name="Dougan G."/>
            <person name="James K.D."/>
            <person name="Thomson N.R."/>
            <person name="Pickard D."/>
            <person name="Wain J."/>
            <person name="Churcher C.M."/>
            <person name="Mungall K.L."/>
            <person name="Bentley S.D."/>
            <person name="Holden M.T.G."/>
            <person name="Sebaihia M."/>
            <person name="Baker S."/>
            <person name="Basham D."/>
            <person name="Brooks K."/>
            <person name="Chillingworth T."/>
            <person name="Connerton P."/>
            <person name="Cronin A."/>
            <person name="Davis P."/>
            <person name="Davies R.M."/>
            <person name="Dowd L."/>
            <person name="White N."/>
            <person name="Farrar J."/>
            <person name="Feltwell T."/>
            <person name="Hamlin N."/>
            <person name="Haque A."/>
            <person name="Hien T.T."/>
            <person name="Holroyd S."/>
            <person name="Jagels K."/>
            <person name="Krogh A."/>
            <person name="Larsen T.S."/>
            <person name="Leather S."/>
            <person name="Moule S."/>
            <person name="O'Gaora P."/>
            <person name="Parry C."/>
            <person name="Quail M.A."/>
            <person name="Rutherford K.M."/>
            <person name="Simmonds M."/>
            <person name="Skelton J."/>
            <person name="Stevens K."/>
            <person name="Whitehead S."/>
            <person name="Barrell B.G."/>
        </authorList>
    </citation>
    <scope>NUCLEOTIDE SEQUENCE [LARGE SCALE GENOMIC DNA]</scope>
    <source>
        <strain>CT18</strain>
    </source>
</reference>
<reference key="2">
    <citation type="journal article" date="2003" name="J. Bacteriol.">
        <title>Comparative genomics of Salmonella enterica serovar Typhi strains Ty2 and CT18.</title>
        <authorList>
            <person name="Deng W."/>
            <person name="Liou S.-R."/>
            <person name="Plunkett G. III"/>
            <person name="Mayhew G.F."/>
            <person name="Rose D.J."/>
            <person name="Burland V."/>
            <person name="Kodoyianni V."/>
            <person name="Schwartz D.C."/>
            <person name="Blattner F.R."/>
        </authorList>
    </citation>
    <scope>NUCLEOTIDE SEQUENCE [LARGE SCALE GENOMIC DNA]</scope>
    <source>
        <strain>ATCC 700931 / Ty2</strain>
    </source>
</reference>
<protein>
    <recommendedName>
        <fullName evidence="1">HMP-PP phosphatase</fullName>
        <ecNumber evidence="1">3.6.1.-</ecNumber>
    </recommendedName>
</protein>
<sequence length="272" mass="30120">MARLAAFDMDGTLLMPDHHLGRETIATLSRLRERDITLTFATGRHVLEMRHILGTLSLDAYLITGNGTRIHSLEGDVLHRQDLDPQVADTVMHHAWDTRASMHVFNDNGWFTGQEIPALLQAHVYSGFRYQVIDIKSIPAHQVTKICFCGDHDDLIRLRIQLNEALEERAHLCFSAVDCLEVLPLGCNKGSALAVLSNHLGLSLADCMAFGDAMNDREMLGSVGRGLIMGNAMPQLIAALPHLSVIGHCGNQAVSHFLTHWLDNPHLPYSPE</sequence>